<sequence>MAPARLFALLLFFVGGVAESIRETEVIDPQDLLEGRYFSGALPDDEDVVGPGQESDDFELSGSGDLDDLEDSMIGPEVVHPLVPLDNHIPERAGSGSQVPTEPKKLEENEVIPKRISPVEESEDVSNKVSMSSTVQGSNIFERTEVLAALIVGGIVGILFAVFLILLLMYRMKKKDEGSYDLGKKPIYKKAPTNEFYA</sequence>
<comment type="function">
    <text evidence="8">Cell surface proteoglycan which regulates exosome biogenesis in concert with SDCBP and PDCD6IP (PubMed:22660413).</text>
</comment>
<comment type="subunit">
    <text evidence="1 4 6 7">Homodimer. Interacts (via its cytoplasmic domain) with GIPC (via its PDZ domain). Interacts (via its cytoplasmic domain) with NUDT16L1 (By similarity). Interacts with CDCP1 and SDCBP (PubMed:12842047, PubMed:16007225, PubMed:16533050). Interacts with DNM2; this interaction is markedly enhanced at focal ahesion site upon induction of focal adhesions and stress-fiber formation (By similarity).</text>
</comment>
<comment type="interaction">
    <interactant intactId="EBI-3913237">
        <id>P31431</id>
    </interactant>
    <interactant intactId="EBI-20895185">
        <id>Q6PRD1</id>
        <label>GPR179</label>
    </interactant>
    <organismsDiffer>false</organismsDiffer>
    <experiments>2</experiments>
</comment>
<comment type="interaction">
    <interactant intactId="EBI-3913237">
        <id>P31431</id>
    </interactant>
    <interactant intactId="EBI-80490">
        <id>P16871</id>
        <label>IL7R</label>
    </interactant>
    <organismsDiffer>false</organismsDiffer>
    <experiments>3</experiments>
</comment>
<comment type="interaction">
    <interactant intactId="EBI-3913237">
        <id>P31431</id>
    </interactant>
    <interactant intactId="EBI-3932027">
        <id>P21145</id>
        <label>MAL</label>
    </interactant>
    <organismsDiffer>false</organismsDiffer>
    <experiments>3</experiments>
</comment>
<comment type="interaction">
    <interactant intactId="EBI-3913237">
        <id>P31431</id>
    </interactant>
    <interactant intactId="EBI-2845982">
        <id>Q01453</id>
        <label>PMP22</label>
    </interactant>
    <organismsDiffer>false</organismsDiffer>
    <experiments>3</experiments>
</comment>
<comment type="interaction">
    <interactant intactId="EBI-3913237">
        <id>P31431</id>
    </interactant>
    <interactant intactId="EBI-1383528">
        <id>P17252</id>
        <label>PRKCA</label>
    </interactant>
    <organismsDiffer>false</organismsDiffer>
    <experiments>2</experiments>
</comment>
<comment type="interaction">
    <interactant intactId="EBI-3913237">
        <id>P31431</id>
    </interactant>
    <interactant intactId="EBI-1172957">
        <id>P34741</id>
        <label>SDC2</label>
    </interactant>
    <organismsDiffer>false</organismsDiffer>
    <experiments>4</experiments>
</comment>
<comment type="interaction">
    <interactant intactId="EBI-3913237">
        <id>P31431</id>
    </interactant>
    <interactant intactId="EBI-1642090">
        <id>O75056</id>
        <label>SDC3</label>
    </interactant>
    <organismsDiffer>false</organismsDiffer>
    <experiments>2</experiments>
</comment>
<comment type="interaction">
    <interactant intactId="EBI-3913237">
        <id>P31431</id>
    </interactant>
    <interactant intactId="EBI-3913237">
        <id>P31431</id>
        <label>SDC4</label>
    </interactant>
    <organismsDiffer>false</organismsDiffer>
    <experiments>3</experiments>
</comment>
<comment type="interaction">
    <interactant intactId="EBI-3913237">
        <id>P31431</id>
    </interactant>
    <interactant intactId="EBI-347996">
        <id>O43765</id>
        <label>SGTA</label>
    </interactant>
    <organismsDiffer>false</organismsDiffer>
    <experiments>6</experiments>
</comment>
<comment type="interaction">
    <interactant intactId="EBI-3913237">
        <id>P31431</id>
    </interactant>
    <interactant intactId="EBI-744081">
        <id>Q96EQ0</id>
        <label>SGTB</label>
    </interactant>
    <organismsDiffer>false</organismsDiffer>
    <experiments>3</experiments>
</comment>
<comment type="interaction">
    <interactant intactId="EBI-3913237">
        <id>P31431</id>
    </interactant>
    <interactant intactId="EBI-776313">
        <id>Q8C419</id>
        <label>Gpr158</label>
    </interactant>
    <organismsDiffer>true</organismsDiffer>
    <experiments>3</experiments>
</comment>
<comment type="interaction">
    <interactant intactId="EBI-3913237">
        <id>P31431</id>
    </interactant>
    <interactant intactId="EBI-25474821">
        <id>P0DTC2</id>
        <label>S</label>
    </interactant>
    <organismsDiffer>true</organismsDiffer>
    <experiments>17</experiments>
</comment>
<comment type="subcellular location">
    <molecule>Isoform 1</molecule>
    <subcellularLocation>
        <location evidence="3">Membrane</location>
        <topology evidence="3">Single-pass type I membrane protein</topology>
    </subcellularLocation>
    <subcellularLocation>
        <location evidence="11">Secreted</location>
    </subcellularLocation>
    <text evidence="11">Shedding of the ectodomain produces a soluble form.</text>
</comment>
<comment type="subcellular location">
    <molecule>Isoform 2</molecule>
    <subcellularLocation>
        <location>Secreted</location>
    </subcellularLocation>
</comment>
<comment type="alternative products">
    <event type="alternative splicing"/>
    <isoform>
        <id>P31431-1</id>
        <name>1</name>
        <sequence type="displayed"/>
    </isoform>
    <isoform>
        <id>P31431-2</id>
        <name>2</name>
        <sequence type="described" ref="VSP_044449"/>
    </isoform>
</comment>
<comment type="tissue specificity">
    <text evidence="5 10">Detected in fibroblasts (at protein level) (PubMed:1500433, PubMed:36213313). Also expressed in epithelial cells (PubMed:1500433).</text>
</comment>
<comment type="PTM">
    <text evidence="11">Shedding is enhanced by a number of factors such as heparanase, thrombin or EGF. Also by stress and wound healing. PMA-mediated shedding is inhibited by TIMP3.</text>
</comment>
<comment type="PTM">
    <text evidence="2">O-glycosylated; contains both chondroitin sulfate and heparan sulfate. Ser-39, Ser-61 and Ser-63 can all be modified by either chondroitin sulfate or heparan sulfate, and the protein exists in forms that contain only chondroitin sulfate, only heparan sulfate and both chondroitin sulfate and heparan sulfate.</text>
</comment>
<comment type="miscellaneous">
    <molecule>Isoform 2</molecule>
    <text evidence="15">Soluble form, lacks the transmembrane domain.</text>
</comment>
<comment type="similarity">
    <text evidence="15">Belongs to the syndecan proteoglycan family.</text>
</comment>
<feature type="signal peptide" evidence="3">
    <location>
        <begin position="1"/>
        <end position="18"/>
    </location>
</feature>
<feature type="chain" id="PRO_0000033511" description="Syndecan-4">
    <location>
        <begin position="19"/>
        <end position="198"/>
    </location>
</feature>
<feature type="topological domain" description="Extracellular" evidence="3">
    <location>
        <begin position="19"/>
        <end position="145"/>
    </location>
</feature>
<feature type="transmembrane region" description="Helical" evidence="3">
    <location>
        <begin position="146"/>
        <end position="170"/>
    </location>
</feature>
<feature type="topological domain" description="Cytoplasmic" evidence="3">
    <location>
        <begin position="171"/>
        <end position="198"/>
    </location>
</feature>
<feature type="glycosylation site" description="O-linked (Xyl...) (glycosaminoglycan) serine" evidence="2">
    <location>
        <position position="39"/>
    </location>
</feature>
<feature type="glycosylation site" description="O-linked (Xyl...) (glycosaminoglycan) serine" evidence="2">
    <location>
        <position position="61"/>
    </location>
</feature>
<feature type="glycosylation site" description="O-linked (Xyl...) (glycosaminoglycan) serine" evidence="2">
    <location>
        <position position="63"/>
    </location>
</feature>
<feature type="glycosylation site" description="O-linked (Xyl...) (chondroitin sulfate) serine" evidence="9 10">
    <location>
        <position position="95"/>
    </location>
</feature>
<feature type="splice variant" id="VSP_044449" description="In isoform 2." evidence="13 14">
    <original>ALIVGGIVGILFAVFLILLLMYRMKKKDEGSYDLGKKPIYKKAPTNEFYA</original>
    <variation>GCPEH</variation>
    <location>
        <begin position="149"/>
        <end position="198"/>
    </location>
</feature>
<feature type="sequence variant" id="VAR_021851" description="In dbSNP:rs2228384." evidence="5 12">
    <original>F</original>
    <variation>L</variation>
    <location>
        <position position="12"/>
    </location>
</feature>
<feature type="strand" evidence="17">
    <location>
        <begin position="192"/>
        <end position="194"/>
    </location>
</feature>
<feature type="strand" evidence="18">
    <location>
        <begin position="196"/>
        <end position="198"/>
    </location>
</feature>
<proteinExistence type="evidence at protein level"/>
<protein>
    <recommendedName>
        <fullName evidence="15">Syndecan-4</fullName>
        <shortName>SYND4</shortName>
    </recommendedName>
    <alternativeName>
        <fullName>Amphiglycan</fullName>
    </alternativeName>
    <alternativeName>
        <fullName>Ryudocan core protein</fullName>
    </alternativeName>
</protein>
<gene>
    <name evidence="16" type="primary">SDC4</name>
</gene>
<name>SDC4_HUMAN</name>
<evidence type="ECO:0000250" key="1">
    <source>
        <dbReference type="UniProtKB" id="O35988"/>
    </source>
</evidence>
<evidence type="ECO:0000250" key="2">
    <source>
        <dbReference type="UniProtKB" id="P34901"/>
    </source>
</evidence>
<evidence type="ECO:0000255" key="3"/>
<evidence type="ECO:0000269" key="4">
    <source>
    </source>
</evidence>
<evidence type="ECO:0000269" key="5">
    <source>
    </source>
</evidence>
<evidence type="ECO:0000269" key="6">
    <source>
    </source>
</evidence>
<evidence type="ECO:0000269" key="7">
    <source>
    </source>
</evidence>
<evidence type="ECO:0000269" key="8">
    <source>
    </source>
</evidence>
<evidence type="ECO:0000269" key="9">
    <source>
    </source>
</evidence>
<evidence type="ECO:0000269" key="10">
    <source>
    </source>
</evidence>
<evidence type="ECO:0000269" key="11">
    <source>
    </source>
</evidence>
<evidence type="ECO:0000269" key="12">
    <source ref="6"/>
</evidence>
<evidence type="ECO:0000303" key="13">
    <source>
    </source>
</evidence>
<evidence type="ECO:0000303" key="14">
    <source ref="10"/>
</evidence>
<evidence type="ECO:0000305" key="15"/>
<evidence type="ECO:0000312" key="16">
    <source>
        <dbReference type="HGNC" id="HGNC:10661"/>
    </source>
</evidence>
<evidence type="ECO:0007829" key="17">
    <source>
        <dbReference type="PDB" id="1EJQ"/>
    </source>
</evidence>
<evidence type="ECO:0007829" key="18">
    <source>
        <dbReference type="PDB" id="1OBY"/>
    </source>
</evidence>
<dbReference type="EMBL" id="X67016">
    <property type="protein sequence ID" value="CAA47406.1"/>
    <property type="molecule type" value="mRNA"/>
</dbReference>
<dbReference type="EMBL" id="D13292">
    <property type="protein sequence ID" value="BAA02550.1"/>
    <property type="molecule type" value="mRNA"/>
</dbReference>
<dbReference type="EMBL" id="D79206">
    <property type="protein sequence ID" value="BAA19613.1"/>
    <property type="molecule type" value="Genomic_DNA"/>
</dbReference>
<dbReference type="EMBL" id="AK312507">
    <property type="protein sequence ID" value="BAG35408.1"/>
    <property type="molecule type" value="mRNA"/>
</dbReference>
<dbReference type="EMBL" id="CR542045">
    <property type="protein sequence ID" value="CAG46842.1"/>
    <property type="molecule type" value="mRNA"/>
</dbReference>
<dbReference type="EMBL" id="CR542074">
    <property type="protein sequence ID" value="CAG46871.1"/>
    <property type="molecule type" value="mRNA"/>
</dbReference>
<dbReference type="EMBL" id="AK222695">
    <property type="protein sequence ID" value="BAD96415.1"/>
    <property type="molecule type" value="mRNA"/>
</dbReference>
<dbReference type="EMBL" id="AK223243">
    <property type="protein sequence ID" value="BAD96963.1"/>
    <property type="molecule type" value="mRNA"/>
</dbReference>
<dbReference type="EMBL" id="AL021578">
    <property type="status" value="NOT_ANNOTATED_CDS"/>
    <property type="molecule type" value="Genomic_DNA"/>
</dbReference>
<dbReference type="EMBL" id="CH471077">
    <property type="protein sequence ID" value="EAW75861.1"/>
    <property type="molecule type" value="Genomic_DNA"/>
</dbReference>
<dbReference type="EMBL" id="CH471077">
    <property type="protein sequence ID" value="EAW75862.1"/>
    <property type="molecule type" value="Genomic_DNA"/>
</dbReference>
<dbReference type="EMBL" id="BC030805">
    <property type="protein sequence ID" value="AAH30805.1"/>
    <property type="molecule type" value="mRNA"/>
</dbReference>
<dbReference type="EMBL" id="AA151028">
    <property type="status" value="NOT_ANNOTATED_CDS"/>
    <property type="molecule type" value="mRNA"/>
</dbReference>
<dbReference type="EMBL" id="AA258502">
    <property type="status" value="NOT_ANNOTATED_CDS"/>
    <property type="molecule type" value="mRNA"/>
</dbReference>
<dbReference type="CCDS" id="CCDS13350.1">
    <molecule id="P31431-1"/>
</dbReference>
<dbReference type="PIR" id="JC1457">
    <property type="entry name" value="JC1457"/>
</dbReference>
<dbReference type="RefSeq" id="NP_002990.2">
    <molecule id="P31431-1"/>
    <property type="nucleotide sequence ID" value="NM_002999.3"/>
</dbReference>
<dbReference type="PDB" id="1EJP">
    <property type="method" value="NMR"/>
    <property type="chains" value="A/B=171-198"/>
</dbReference>
<dbReference type="PDB" id="1EJQ">
    <property type="method" value="NMR"/>
    <property type="chains" value="A/B=171-198"/>
</dbReference>
<dbReference type="PDB" id="1OBY">
    <property type="method" value="X-ray"/>
    <property type="resolution" value="1.85 A"/>
    <property type="chains" value="P/Q=193-198"/>
</dbReference>
<dbReference type="PDB" id="1YBO">
    <property type="method" value="X-ray"/>
    <property type="resolution" value="2.30 A"/>
    <property type="chains" value="C/D=182-198"/>
</dbReference>
<dbReference type="PDB" id="8BLV">
    <property type="method" value="X-ray"/>
    <property type="resolution" value="1.50 A"/>
    <property type="chains" value="C/D=191-198"/>
</dbReference>
<dbReference type="PDBsum" id="1EJP"/>
<dbReference type="PDBsum" id="1EJQ"/>
<dbReference type="PDBsum" id="1OBY"/>
<dbReference type="PDBsum" id="1YBO"/>
<dbReference type="PDBsum" id="8BLV"/>
<dbReference type="BMRB" id="P31431"/>
<dbReference type="SASBDB" id="P31431"/>
<dbReference type="SMR" id="P31431"/>
<dbReference type="BioGRID" id="112286">
    <property type="interactions" value="88"/>
</dbReference>
<dbReference type="CORUM" id="P31431"/>
<dbReference type="DIP" id="DIP-29945N"/>
<dbReference type="ELM" id="P31431"/>
<dbReference type="FunCoup" id="P31431">
    <property type="interactions" value="490"/>
</dbReference>
<dbReference type="IntAct" id="P31431">
    <property type="interactions" value="65"/>
</dbReference>
<dbReference type="MINT" id="P31431"/>
<dbReference type="STRING" id="9606.ENSP00000361818"/>
<dbReference type="TCDB" id="9.A.35.1.1">
    <property type="family name" value="the peptide translocating syndecan (syndecan) family"/>
</dbReference>
<dbReference type="GlyCosmos" id="P31431">
    <property type="glycosylation" value="5 sites, 1 glycan"/>
</dbReference>
<dbReference type="GlyGen" id="P31431">
    <property type="glycosylation" value="9 sites, 2 O-linked glycans (4 sites)"/>
</dbReference>
<dbReference type="iPTMnet" id="P31431"/>
<dbReference type="PhosphoSitePlus" id="P31431"/>
<dbReference type="BioMuta" id="SDC4"/>
<dbReference type="DMDM" id="2851418"/>
<dbReference type="jPOST" id="P31431"/>
<dbReference type="MassIVE" id="P31431"/>
<dbReference type="PaxDb" id="9606-ENSP00000361818"/>
<dbReference type="PeptideAtlas" id="P31431"/>
<dbReference type="ProteomicsDB" id="54789">
    <molecule id="P31431-1"/>
</dbReference>
<dbReference type="Pumba" id="P31431"/>
<dbReference type="TopDownProteomics" id="P31431-1">
    <molecule id="P31431-1"/>
</dbReference>
<dbReference type="Antibodypedia" id="969">
    <property type="antibodies" value="497 antibodies from 41 providers"/>
</dbReference>
<dbReference type="DNASU" id="6385"/>
<dbReference type="Ensembl" id="ENST00000372733.3">
    <molecule id="P31431-1"/>
    <property type="protein sequence ID" value="ENSP00000361818.3"/>
    <property type="gene ID" value="ENSG00000124145.6"/>
</dbReference>
<dbReference type="GeneID" id="6385"/>
<dbReference type="KEGG" id="hsa:6385"/>
<dbReference type="MANE-Select" id="ENST00000372733.3">
    <property type="protein sequence ID" value="ENSP00000361818.3"/>
    <property type="RefSeq nucleotide sequence ID" value="NM_002999.4"/>
    <property type="RefSeq protein sequence ID" value="NP_002990.2"/>
</dbReference>
<dbReference type="UCSC" id="uc002xnu.4">
    <molecule id="P31431-1"/>
    <property type="organism name" value="human"/>
</dbReference>
<dbReference type="AGR" id="HGNC:10661"/>
<dbReference type="CTD" id="6385"/>
<dbReference type="DisGeNET" id="6385"/>
<dbReference type="GeneCards" id="SDC4"/>
<dbReference type="HGNC" id="HGNC:10661">
    <property type="gene designation" value="SDC4"/>
</dbReference>
<dbReference type="HPA" id="ENSG00000124145">
    <property type="expression patterns" value="Tissue enhanced (liver)"/>
</dbReference>
<dbReference type="MIM" id="600017">
    <property type="type" value="gene"/>
</dbReference>
<dbReference type="neXtProt" id="NX_P31431"/>
<dbReference type="OpenTargets" id="ENSG00000124145"/>
<dbReference type="PharmGKB" id="PA35591"/>
<dbReference type="VEuPathDB" id="HostDB:ENSG00000124145"/>
<dbReference type="eggNOG" id="ENOG502S1SZ">
    <property type="taxonomic scope" value="Eukaryota"/>
</dbReference>
<dbReference type="GeneTree" id="ENSGT00940000160663"/>
<dbReference type="HOGENOM" id="CLU_046599_3_0_1"/>
<dbReference type="InParanoid" id="P31431"/>
<dbReference type="OMA" id="WVPTEPK"/>
<dbReference type="OrthoDB" id="10044468at2759"/>
<dbReference type="PAN-GO" id="P31431">
    <property type="GO annotations" value="2 GO annotations based on evolutionary models"/>
</dbReference>
<dbReference type="PhylomeDB" id="P31431"/>
<dbReference type="TreeFam" id="TF320463"/>
<dbReference type="PathwayCommons" id="P31431"/>
<dbReference type="Reactome" id="R-HSA-1971475">
    <property type="pathway name" value="A tetrasaccharide linker sequence is required for GAG synthesis"/>
</dbReference>
<dbReference type="Reactome" id="R-HSA-2022928">
    <property type="pathway name" value="HS-GAG biosynthesis"/>
</dbReference>
<dbReference type="Reactome" id="R-HSA-2024096">
    <property type="pathway name" value="HS-GAG degradation"/>
</dbReference>
<dbReference type="Reactome" id="R-HSA-202733">
    <property type="pathway name" value="Cell surface interactions at the vascular wall"/>
</dbReference>
<dbReference type="Reactome" id="R-HSA-3000170">
    <property type="pathway name" value="Syndecan interactions"/>
</dbReference>
<dbReference type="Reactome" id="R-HSA-3560783">
    <property type="pathway name" value="Defective B4GALT7 causes EDS, progeroid type"/>
</dbReference>
<dbReference type="Reactome" id="R-HSA-3560801">
    <property type="pathway name" value="Defective B3GAT3 causes JDSSDHD"/>
</dbReference>
<dbReference type="Reactome" id="R-HSA-3656237">
    <property type="pathway name" value="Defective EXT2 causes exostoses 2"/>
</dbReference>
<dbReference type="Reactome" id="R-HSA-3656253">
    <property type="pathway name" value="Defective EXT1 causes exostoses 1, TRPS2 and CHDS"/>
</dbReference>
<dbReference type="Reactome" id="R-HSA-4420332">
    <property type="pathway name" value="Defective B3GALT6 causes EDSP2 and SEMDJL1"/>
</dbReference>
<dbReference type="Reactome" id="R-HSA-9694614">
    <property type="pathway name" value="Attachment and Entry"/>
</dbReference>
<dbReference type="Reactome" id="R-HSA-975634">
    <property type="pathway name" value="Retinoid metabolism and transport"/>
</dbReference>
<dbReference type="Reactome" id="R-HSA-9820960">
    <property type="pathway name" value="Respiratory syncytial virus (RSV) attachment and entry"/>
</dbReference>
<dbReference type="Reactome" id="R-HSA-9833110">
    <property type="pathway name" value="RSV-host interactions"/>
</dbReference>
<dbReference type="SignaLink" id="P31431"/>
<dbReference type="SIGNOR" id="P31431"/>
<dbReference type="BioGRID-ORCS" id="6385">
    <property type="hits" value="19 hits in 1156 CRISPR screens"/>
</dbReference>
<dbReference type="ChiTaRS" id="SDC4">
    <property type="organism name" value="human"/>
</dbReference>
<dbReference type="EvolutionaryTrace" id="P31431"/>
<dbReference type="GeneWiki" id="SDC4"/>
<dbReference type="GenomeRNAi" id="6385"/>
<dbReference type="Pharos" id="P31431">
    <property type="development level" value="Tbio"/>
</dbReference>
<dbReference type="PRO" id="PR:P31431"/>
<dbReference type="Proteomes" id="UP000005640">
    <property type="component" value="Chromosome 20"/>
</dbReference>
<dbReference type="RNAct" id="P31431">
    <property type="molecule type" value="protein"/>
</dbReference>
<dbReference type="Bgee" id="ENSG00000124145">
    <property type="expression patterns" value="Expressed in olfactory segment of nasal mucosa and 206 other cell types or tissues"/>
</dbReference>
<dbReference type="GO" id="GO:0009986">
    <property type="term" value="C:cell surface"/>
    <property type="evidence" value="ECO:0000318"/>
    <property type="project" value="GO_Central"/>
</dbReference>
<dbReference type="GO" id="GO:0043034">
    <property type="term" value="C:costamere"/>
    <property type="evidence" value="ECO:0007669"/>
    <property type="project" value="Ensembl"/>
</dbReference>
<dbReference type="GO" id="GO:0070062">
    <property type="term" value="C:extracellular exosome"/>
    <property type="evidence" value="ECO:0007005"/>
    <property type="project" value="UniProtKB"/>
</dbReference>
<dbReference type="GO" id="GO:0005925">
    <property type="term" value="C:focal adhesion"/>
    <property type="evidence" value="ECO:0007669"/>
    <property type="project" value="Ensembl"/>
</dbReference>
<dbReference type="GO" id="GO:0005796">
    <property type="term" value="C:Golgi lumen"/>
    <property type="evidence" value="ECO:0000304"/>
    <property type="project" value="Reactome"/>
</dbReference>
<dbReference type="GO" id="GO:0043202">
    <property type="term" value="C:lysosomal lumen"/>
    <property type="evidence" value="ECO:0000304"/>
    <property type="project" value="Reactome"/>
</dbReference>
<dbReference type="GO" id="GO:0005886">
    <property type="term" value="C:plasma membrane"/>
    <property type="evidence" value="ECO:0000304"/>
    <property type="project" value="Reactome"/>
</dbReference>
<dbReference type="GO" id="GO:0001968">
    <property type="term" value="F:fibronectin binding"/>
    <property type="evidence" value="ECO:0007669"/>
    <property type="project" value="Ensembl"/>
</dbReference>
<dbReference type="GO" id="GO:0042802">
    <property type="term" value="F:identical protein binding"/>
    <property type="evidence" value="ECO:0000353"/>
    <property type="project" value="IntAct"/>
</dbReference>
<dbReference type="GO" id="GO:0005080">
    <property type="term" value="F:protein kinase C binding"/>
    <property type="evidence" value="ECO:0007669"/>
    <property type="project" value="Ensembl"/>
</dbReference>
<dbReference type="GO" id="GO:0070053">
    <property type="term" value="F:thrombospondin receptor activity"/>
    <property type="evidence" value="ECO:0000315"/>
    <property type="project" value="BHF-UCL"/>
</dbReference>
<dbReference type="GO" id="GO:0016477">
    <property type="term" value="P:cell migration"/>
    <property type="evidence" value="ECO:0000318"/>
    <property type="project" value="GO_Central"/>
</dbReference>
<dbReference type="GO" id="GO:0060122">
    <property type="term" value="P:inner ear receptor cell stereocilium organization"/>
    <property type="evidence" value="ECO:0007669"/>
    <property type="project" value="Ensembl"/>
</dbReference>
<dbReference type="GO" id="GO:0042130">
    <property type="term" value="P:negative regulation of T cell proliferation"/>
    <property type="evidence" value="ECO:0000315"/>
    <property type="project" value="ParkinsonsUK-UCL"/>
</dbReference>
<dbReference type="GO" id="GO:0001843">
    <property type="term" value="P:neural tube closure"/>
    <property type="evidence" value="ECO:0007669"/>
    <property type="project" value="Ensembl"/>
</dbReference>
<dbReference type="GO" id="GO:1903543">
    <property type="term" value="P:positive regulation of exosomal secretion"/>
    <property type="evidence" value="ECO:0000315"/>
    <property type="project" value="UniProtKB"/>
</dbReference>
<dbReference type="GO" id="GO:1903553">
    <property type="term" value="P:positive regulation of extracellular exosome assembly"/>
    <property type="evidence" value="ECO:0000315"/>
    <property type="project" value="UniProtKB"/>
</dbReference>
<dbReference type="GO" id="GO:0051894">
    <property type="term" value="P:positive regulation of focal adhesion assembly"/>
    <property type="evidence" value="ECO:0007669"/>
    <property type="project" value="Ensembl"/>
</dbReference>
<dbReference type="GO" id="GO:0051496">
    <property type="term" value="P:positive regulation of stress fiber assembly"/>
    <property type="evidence" value="ECO:0007669"/>
    <property type="project" value="Ensembl"/>
</dbReference>
<dbReference type="GO" id="GO:0010762">
    <property type="term" value="P:regulation of fibroblast migration"/>
    <property type="evidence" value="ECO:0007669"/>
    <property type="project" value="Ensembl"/>
</dbReference>
<dbReference type="GO" id="GO:0001657">
    <property type="term" value="P:ureteric bud development"/>
    <property type="evidence" value="ECO:0007669"/>
    <property type="project" value="Ensembl"/>
</dbReference>
<dbReference type="GO" id="GO:0042060">
    <property type="term" value="P:wound healing"/>
    <property type="evidence" value="ECO:0007669"/>
    <property type="project" value="Ensembl"/>
</dbReference>
<dbReference type="DisProt" id="DP01434"/>
<dbReference type="InterPro" id="IPR003585">
    <property type="entry name" value="Neurexin-like"/>
</dbReference>
<dbReference type="InterPro" id="IPR001050">
    <property type="entry name" value="Syndecan"/>
</dbReference>
<dbReference type="InterPro" id="IPR027789">
    <property type="entry name" value="Syndecan/Neurexin_dom"/>
</dbReference>
<dbReference type="InterPro" id="IPR030479">
    <property type="entry name" value="Syndecan_CS"/>
</dbReference>
<dbReference type="PANTHER" id="PTHR10915">
    <property type="entry name" value="SYNDECAN"/>
    <property type="match status" value="1"/>
</dbReference>
<dbReference type="PANTHER" id="PTHR10915:SF3">
    <property type="entry name" value="SYNDECAN-4"/>
    <property type="match status" value="1"/>
</dbReference>
<dbReference type="Pfam" id="PF01034">
    <property type="entry name" value="Syndecan"/>
    <property type="match status" value="1"/>
</dbReference>
<dbReference type="SMART" id="SM00294">
    <property type="entry name" value="4.1m"/>
    <property type="match status" value="1"/>
</dbReference>
<dbReference type="PROSITE" id="PS00964">
    <property type="entry name" value="SYNDECAN"/>
    <property type="match status" value="1"/>
</dbReference>
<accession>P31431</accession>
<accession>O00773</accession>
<accession>Q16833</accession>
<accession>Q53FN9</accession>
<accession>Q6FGN3</accession>
<organism>
    <name type="scientific">Homo sapiens</name>
    <name type="common">Human</name>
    <dbReference type="NCBI Taxonomy" id="9606"/>
    <lineage>
        <taxon>Eukaryota</taxon>
        <taxon>Metazoa</taxon>
        <taxon>Chordata</taxon>
        <taxon>Craniata</taxon>
        <taxon>Vertebrata</taxon>
        <taxon>Euteleostomi</taxon>
        <taxon>Mammalia</taxon>
        <taxon>Eutheria</taxon>
        <taxon>Euarchontoglires</taxon>
        <taxon>Primates</taxon>
        <taxon>Haplorrhini</taxon>
        <taxon>Catarrhini</taxon>
        <taxon>Hominidae</taxon>
        <taxon>Homo</taxon>
    </lineage>
</organism>
<keyword id="KW-0002">3D-structure</keyword>
<keyword id="KW-0025">Alternative splicing</keyword>
<keyword id="KW-0325">Glycoprotein</keyword>
<keyword id="KW-0357">Heparan sulfate</keyword>
<keyword id="KW-0472">Membrane</keyword>
<keyword id="KW-0654">Proteoglycan</keyword>
<keyword id="KW-1267">Proteomics identification</keyword>
<keyword id="KW-1185">Reference proteome</keyword>
<keyword id="KW-0964">Secreted</keyword>
<keyword id="KW-0732">Signal</keyword>
<keyword id="KW-0812">Transmembrane</keyword>
<keyword id="KW-1133">Transmembrane helix</keyword>
<reference key="1">
    <citation type="journal article" date="1992" name="J. Cell Biol.">
        <title>Molecular cloning of amphiglycan, a novel integral membrane heparan sulfate proteoglycan expressed by epithelial and fibroblastic cells.</title>
        <authorList>
            <person name="David G."/>
            <person name="van der Schueren B."/>
            <person name="Marynen P."/>
            <person name="Cassiman J.-J."/>
            <person name="van den Berghe H."/>
        </authorList>
    </citation>
    <scope>NUCLEOTIDE SEQUENCE [MRNA] (ISOFORM 1)</scope>
    <scope>TISSUE SPECIFICITY</scope>
    <scope>VARIANT LEU-12</scope>
    <source>
        <tissue>Lung fibroblast</tissue>
    </source>
</reference>
<reference key="2">
    <citation type="journal article" date="1993" name="Biochem. Biophys. Res. Commun.">
        <title>Human ryudocan core protein: molecular cloning and characterization of the cDNA, and chromosomal localization of the gene.</title>
        <authorList>
            <person name="Kojima T."/>
            <person name="Inazawa J."/>
            <person name="Takamatsu J."/>
            <person name="Rosenberg R.D."/>
            <person name="Saito H."/>
        </authorList>
    </citation>
    <scope>NUCLEOTIDE SEQUENCE [MRNA] (ISOFORM 1)</scope>
</reference>
<reference key="3">
    <citation type="journal article" date="1996" name="J. Biochem.">
        <title>Structural organization and promoter activity of the human ryudocan gene.</title>
        <authorList>
            <person name="Takagi A."/>
            <person name="Kojima T."/>
            <person name="Tsuzuki S."/>
            <person name="Katsumi A."/>
            <person name="Yamazaki T."/>
            <person name="Sugiura I."/>
            <person name="Hamaguchi M."/>
            <person name="Saito H."/>
        </authorList>
    </citation>
    <scope>NUCLEOTIDE SEQUENCE [GENOMIC DNA]</scope>
    <source>
        <tissue>Placenta</tissue>
    </source>
</reference>
<reference key="4">
    <citation type="journal article" date="2004" name="Nat. Genet.">
        <title>Complete sequencing and characterization of 21,243 full-length human cDNAs.</title>
        <authorList>
            <person name="Ota T."/>
            <person name="Suzuki Y."/>
            <person name="Nishikawa T."/>
            <person name="Otsuki T."/>
            <person name="Sugiyama T."/>
            <person name="Irie R."/>
            <person name="Wakamatsu A."/>
            <person name="Hayashi K."/>
            <person name="Sato H."/>
            <person name="Nagai K."/>
            <person name="Kimura K."/>
            <person name="Makita H."/>
            <person name="Sekine M."/>
            <person name="Obayashi M."/>
            <person name="Nishi T."/>
            <person name="Shibahara T."/>
            <person name="Tanaka T."/>
            <person name="Ishii S."/>
            <person name="Yamamoto J."/>
            <person name="Saito K."/>
            <person name="Kawai Y."/>
            <person name="Isono Y."/>
            <person name="Nakamura Y."/>
            <person name="Nagahari K."/>
            <person name="Murakami K."/>
            <person name="Yasuda T."/>
            <person name="Iwayanagi T."/>
            <person name="Wagatsuma M."/>
            <person name="Shiratori A."/>
            <person name="Sudo H."/>
            <person name="Hosoiri T."/>
            <person name="Kaku Y."/>
            <person name="Kodaira H."/>
            <person name="Kondo H."/>
            <person name="Sugawara M."/>
            <person name="Takahashi M."/>
            <person name="Kanda K."/>
            <person name="Yokoi T."/>
            <person name="Furuya T."/>
            <person name="Kikkawa E."/>
            <person name="Omura Y."/>
            <person name="Abe K."/>
            <person name="Kamihara K."/>
            <person name="Katsuta N."/>
            <person name="Sato K."/>
            <person name="Tanikawa M."/>
            <person name="Yamazaki M."/>
            <person name="Ninomiya K."/>
            <person name="Ishibashi T."/>
            <person name="Yamashita H."/>
            <person name="Murakawa K."/>
            <person name="Fujimori K."/>
            <person name="Tanai H."/>
            <person name="Kimata M."/>
            <person name="Watanabe M."/>
            <person name="Hiraoka S."/>
            <person name="Chiba Y."/>
            <person name="Ishida S."/>
            <person name="Ono Y."/>
            <person name="Takiguchi S."/>
            <person name="Watanabe S."/>
            <person name="Yosida M."/>
            <person name="Hotuta T."/>
            <person name="Kusano J."/>
            <person name="Kanehori K."/>
            <person name="Takahashi-Fujii A."/>
            <person name="Hara H."/>
            <person name="Tanase T.-O."/>
            <person name="Nomura Y."/>
            <person name="Togiya S."/>
            <person name="Komai F."/>
            <person name="Hara R."/>
            <person name="Takeuchi K."/>
            <person name="Arita M."/>
            <person name="Imose N."/>
            <person name="Musashino K."/>
            <person name="Yuuki H."/>
            <person name="Oshima A."/>
            <person name="Sasaki N."/>
            <person name="Aotsuka S."/>
            <person name="Yoshikawa Y."/>
            <person name="Matsunawa H."/>
            <person name="Ichihara T."/>
            <person name="Shiohata N."/>
            <person name="Sano S."/>
            <person name="Moriya S."/>
            <person name="Momiyama H."/>
            <person name="Satoh N."/>
            <person name="Takami S."/>
            <person name="Terashima Y."/>
            <person name="Suzuki O."/>
            <person name="Nakagawa S."/>
            <person name="Senoh A."/>
            <person name="Mizoguchi H."/>
            <person name="Goto Y."/>
            <person name="Shimizu F."/>
            <person name="Wakebe H."/>
            <person name="Hishigaki H."/>
            <person name="Watanabe T."/>
            <person name="Sugiyama A."/>
            <person name="Takemoto M."/>
            <person name="Kawakami B."/>
            <person name="Yamazaki M."/>
            <person name="Watanabe K."/>
            <person name="Kumagai A."/>
            <person name="Itakura S."/>
            <person name="Fukuzumi Y."/>
            <person name="Fujimori Y."/>
            <person name="Komiyama M."/>
            <person name="Tashiro H."/>
            <person name="Tanigami A."/>
            <person name="Fujiwara T."/>
            <person name="Ono T."/>
            <person name="Yamada K."/>
            <person name="Fujii Y."/>
            <person name="Ozaki K."/>
            <person name="Hirao M."/>
            <person name="Ohmori Y."/>
            <person name="Kawabata A."/>
            <person name="Hikiji T."/>
            <person name="Kobatake N."/>
            <person name="Inagaki H."/>
            <person name="Ikema Y."/>
            <person name="Okamoto S."/>
            <person name="Okitani R."/>
            <person name="Kawakami T."/>
            <person name="Noguchi S."/>
            <person name="Itoh T."/>
            <person name="Shigeta K."/>
            <person name="Senba T."/>
            <person name="Matsumura K."/>
            <person name="Nakajima Y."/>
            <person name="Mizuno T."/>
            <person name="Morinaga M."/>
            <person name="Sasaki M."/>
            <person name="Togashi T."/>
            <person name="Oyama M."/>
            <person name="Hata H."/>
            <person name="Watanabe M."/>
            <person name="Komatsu T."/>
            <person name="Mizushima-Sugano J."/>
            <person name="Satoh T."/>
            <person name="Shirai Y."/>
            <person name="Takahashi Y."/>
            <person name="Nakagawa K."/>
            <person name="Okumura K."/>
            <person name="Nagase T."/>
            <person name="Nomura N."/>
            <person name="Kikuchi H."/>
            <person name="Masuho Y."/>
            <person name="Yamashita R."/>
            <person name="Nakai K."/>
            <person name="Yada T."/>
            <person name="Nakamura Y."/>
            <person name="Ohara O."/>
            <person name="Isogai T."/>
            <person name="Sugano S."/>
        </authorList>
    </citation>
    <scope>NUCLEOTIDE SEQUENCE [LARGE SCALE MRNA] (ISOFORM 1)</scope>
    <source>
        <tissue>Thalamus</tissue>
    </source>
</reference>
<reference key="5">
    <citation type="submission" date="2004-06" db="EMBL/GenBank/DDBJ databases">
        <title>Cloning of human full open reading frames in Gateway(TM) system entry vector (pDONR201).</title>
        <authorList>
            <person name="Ebert L."/>
            <person name="Schick M."/>
            <person name="Neubert P."/>
            <person name="Schatten R."/>
            <person name="Henze S."/>
            <person name="Korn B."/>
        </authorList>
    </citation>
    <scope>NUCLEOTIDE SEQUENCE [LARGE SCALE MRNA] (ISOFORM 1)</scope>
</reference>
<reference key="6">
    <citation type="submission" date="2005-04" db="EMBL/GenBank/DDBJ databases">
        <authorList>
            <person name="Suzuki Y."/>
            <person name="Sugano S."/>
            <person name="Totoki Y."/>
            <person name="Toyoda A."/>
            <person name="Takeda T."/>
            <person name="Sakaki Y."/>
            <person name="Tanaka A."/>
            <person name="Yokoyama S."/>
        </authorList>
    </citation>
    <scope>NUCLEOTIDE SEQUENCE [LARGE SCALE MRNA] (ISOFORM 1)</scope>
    <scope>VARIANT LEU-12</scope>
    <source>
        <tissue>Stomach</tissue>
    </source>
</reference>
<reference key="7">
    <citation type="journal article" date="2001" name="Nature">
        <title>The DNA sequence and comparative analysis of human chromosome 20.</title>
        <authorList>
            <person name="Deloukas P."/>
            <person name="Matthews L.H."/>
            <person name="Ashurst J.L."/>
            <person name="Burton J."/>
            <person name="Gilbert J.G.R."/>
            <person name="Jones M."/>
            <person name="Stavrides G."/>
            <person name="Almeida J.P."/>
            <person name="Babbage A.K."/>
            <person name="Bagguley C.L."/>
            <person name="Bailey J."/>
            <person name="Barlow K.F."/>
            <person name="Bates K.N."/>
            <person name="Beard L.M."/>
            <person name="Beare D.M."/>
            <person name="Beasley O.P."/>
            <person name="Bird C.P."/>
            <person name="Blakey S.E."/>
            <person name="Bridgeman A.M."/>
            <person name="Brown A.J."/>
            <person name="Buck D."/>
            <person name="Burrill W.D."/>
            <person name="Butler A.P."/>
            <person name="Carder C."/>
            <person name="Carter N.P."/>
            <person name="Chapman J.C."/>
            <person name="Clamp M."/>
            <person name="Clark G."/>
            <person name="Clark L.N."/>
            <person name="Clark S.Y."/>
            <person name="Clee C.M."/>
            <person name="Clegg S."/>
            <person name="Cobley V.E."/>
            <person name="Collier R.E."/>
            <person name="Connor R.E."/>
            <person name="Corby N.R."/>
            <person name="Coulson A."/>
            <person name="Coville G.J."/>
            <person name="Deadman R."/>
            <person name="Dhami P.D."/>
            <person name="Dunn M."/>
            <person name="Ellington A.G."/>
            <person name="Frankland J.A."/>
            <person name="Fraser A."/>
            <person name="French L."/>
            <person name="Garner P."/>
            <person name="Grafham D.V."/>
            <person name="Griffiths C."/>
            <person name="Griffiths M.N.D."/>
            <person name="Gwilliam R."/>
            <person name="Hall R.E."/>
            <person name="Hammond S."/>
            <person name="Harley J.L."/>
            <person name="Heath P.D."/>
            <person name="Ho S."/>
            <person name="Holden J.L."/>
            <person name="Howden P.J."/>
            <person name="Huckle E."/>
            <person name="Hunt A.R."/>
            <person name="Hunt S.E."/>
            <person name="Jekosch K."/>
            <person name="Johnson C.M."/>
            <person name="Johnson D."/>
            <person name="Kay M.P."/>
            <person name="Kimberley A.M."/>
            <person name="King A."/>
            <person name="Knights A."/>
            <person name="Laird G.K."/>
            <person name="Lawlor S."/>
            <person name="Lehvaeslaiho M.H."/>
            <person name="Leversha M.A."/>
            <person name="Lloyd C."/>
            <person name="Lloyd D.M."/>
            <person name="Lovell J.D."/>
            <person name="Marsh V.L."/>
            <person name="Martin S.L."/>
            <person name="McConnachie L.J."/>
            <person name="McLay K."/>
            <person name="McMurray A.A."/>
            <person name="Milne S.A."/>
            <person name="Mistry D."/>
            <person name="Moore M.J.F."/>
            <person name="Mullikin J.C."/>
            <person name="Nickerson T."/>
            <person name="Oliver K."/>
            <person name="Parker A."/>
            <person name="Patel R."/>
            <person name="Pearce T.A.V."/>
            <person name="Peck A.I."/>
            <person name="Phillimore B.J.C.T."/>
            <person name="Prathalingam S.R."/>
            <person name="Plumb R.W."/>
            <person name="Ramsay H."/>
            <person name="Rice C.M."/>
            <person name="Ross M.T."/>
            <person name="Scott C.E."/>
            <person name="Sehra H.K."/>
            <person name="Shownkeen R."/>
            <person name="Sims S."/>
            <person name="Skuce C.D."/>
            <person name="Smith M.L."/>
            <person name="Soderlund C."/>
            <person name="Steward C.A."/>
            <person name="Sulston J.E."/>
            <person name="Swann R.M."/>
            <person name="Sycamore N."/>
            <person name="Taylor R."/>
            <person name="Tee L."/>
            <person name="Thomas D.W."/>
            <person name="Thorpe A."/>
            <person name="Tracey A."/>
            <person name="Tromans A.C."/>
            <person name="Vaudin M."/>
            <person name="Wall M."/>
            <person name="Wallis J.M."/>
            <person name="Whitehead S.L."/>
            <person name="Whittaker P."/>
            <person name="Willey D.L."/>
            <person name="Williams L."/>
            <person name="Williams S.A."/>
            <person name="Wilming L."/>
            <person name="Wray P.W."/>
            <person name="Hubbard T."/>
            <person name="Durbin R.M."/>
            <person name="Bentley D.R."/>
            <person name="Beck S."/>
            <person name="Rogers J."/>
        </authorList>
    </citation>
    <scope>NUCLEOTIDE SEQUENCE [LARGE SCALE GENOMIC DNA]</scope>
</reference>
<reference key="8">
    <citation type="submission" date="2005-09" db="EMBL/GenBank/DDBJ databases">
        <authorList>
            <person name="Mural R.J."/>
            <person name="Istrail S."/>
            <person name="Sutton G."/>
            <person name="Florea L."/>
            <person name="Halpern A.L."/>
            <person name="Mobarry C.M."/>
            <person name="Lippert R."/>
            <person name="Walenz B."/>
            <person name="Shatkay H."/>
            <person name="Dew I."/>
            <person name="Miller J.R."/>
            <person name="Flanigan M.J."/>
            <person name="Edwards N.J."/>
            <person name="Bolanos R."/>
            <person name="Fasulo D."/>
            <person name="Halldorsson B.V."/>
            <person name="Hannenhalli S."/>
            <person name="Turner R."/>
            <person name="Yooseph S."/>
            <person name="Lu F."/>
            <person name="Nusskern D.R."/>
            <person name="Shue B.C."/>
            <person name="Zheng X.H."/>
            <person name="Zhong F."/>
            <person name="Delcher A.L."/>
            <person name="Huson D.H."/>
            <person name="Kravitz S.A."/>
            <person name="Mouchard L."/>
            <person name="Reinert K."/>
            <person name="Remington K.A."/>
            <person name="Clark A.G."/>
            <person name="Waterman M.S."/>
            <person name="Eichler E.E."/>
            <person name="Adams M.D."/>
            <person name="Hunkapiller M.W."/>
            <person name="Myers E.W."/>
            <person name="Venter J.C."/>
        </authorList>
    </citation>
    <scope>NUCLEOTIDE SEQUENCE [LARGE SCALE GENOMIC DNA]</scope>
</reference>
<reference key="9">
    <citation type="journal article" date="2004" name="Genome Res.">
        <title>The status, quality, and expansion of the NIH full-length cDNA project: the Mammalian Gene Collection (MGC).</title>
        <authorList>
            <consortium name="The MGC Project Team"/>
        </authorList>
    </citation>
    <scope>NUCLEOTIDE SEQUENCE [LARGE SCALE MRNA] (ISOFORM 1)</scope>
    <source>
        <tissue>Lung</tissue>
    </source>
</reference>
<reference key="10">
    <citation type="submission" date="2000-03" db="EMBL/GenBank/DDBJ databases">
        <title>The WashU-Merck EST project.</title>
        <authorList>
            <person name="Hillier L."/>
            <person name="Clark N."/>
            <person name="Dubuque T."/>
            <person name="Elliston K."/>
            <person name="Hawkins M."/>
            <person name="Holman M."/>
            <person name="Hultman M."/>
            <person name="Kucaba T."/>
            <person name="Le M."/>
            <person name="Lennon G."/>
            <person name="Marra M."/>
            <person name="Parsons J."/>
            <person name="Rifkin L."/>
            <person name="Rohlfing T."/>
            <person name="Soares M."/>
            <person name="Tan F."/>
            <person name="Trevaskis E."/>
            <person name="Waterston R."/>
            <person name="Williamson A."/>
            <person name="Wohldmann P."/>
            <person name="Wilson R."/>
        </authorList>
    </citation>
    <scope>NUCLEOTIDE SEQUENCE [LARGE SCALE MRNA] OF 75-153 (ISOFORM 2)</scope>
</reference>
<reference key="11">
    <citation type="journal article" date="1996" name="Genome Res.">
        <title>Generation and analysis of 280,000 human expressed sequence tags.</title>
        <authorList>
            <person name="Hillier L.D."/>
            <person name="Lennon G."/>
            <person name="Becker M."/>
            <person name="Bonaldo M.F."/>
            <person name="Chiapelli B."/>
            <person name="Chissoe S."/>
            <person name="Dietrich N."/>
            <person name="DuBuque T."/>
            <person name="Favello A."/>
            <person name="Gish W."/>
            <person name="Hawkins M."/>
            <person name="Hultman M."/>
            <person name="Kucaba T."/>
            <person name="Lacy M."/>
            <person name="Le M."/>
            <person name="Le N."/>
            <person name="Mardis E."/>
            <person name="Moore B."/>
            <person name="Morris M."/>
            <person name="Parsons J."/>
            <person name="Prange C."/>
            <person name="Rifkin L."/>
            <person name="Rohlfing T."/>
            <person name="Schellenberg K."/>
            <person name="Bento Soares M."/>
            <person name="Tan F."/>
            <person name="Thierry-Meg J."/>
            <person name="Trevaskis E."/>
            <person name="Underwood K."/>
            <person name="Wohldman P."/>
            <person name="Waterston R."/>
            <person name="Wilson R."/>
            <person name="Marra M."/>
        </authorList>
    </citation>
    <scope>NUCLEOTIDE SEQUENCE [LARGE SCALE MRNA] OF 125-153 (ISOFORM 2)</scope>
    <source>
        <tissue>Uterus</tissue>
    </source>
</reference>
<reference key="12">
    <citation type="journal article" date="1997" name="J. Biol. Chem.">
        <title>Regulated shedding of syndecan-1 and -4 ectodomains by thrombin and growth factor receptor activation.</title>
        <authorList>
            <person name="Subramanian S.V."/>
            <person name="Fitzgerald M.L."/>
            <person name="Bernfield M."/>
        </authorList>
    </citation>
    <scope>SHEDDING</scope>
    <scope>SUBCELLULAR LOCATION</scope>
</reference>
<reference key="13">
    <citation type="journal article" date="2003" name="FEBS Lett.">
        <title>Widespread production of novel soluble protein isoforms by alternative splicing removal of transmembrane anchoring domains.</title>
        <authorList>
            <person name="Xing Y."/>
            <person name="Xu Q."/>
            <person name="Lee C."/>
        </authorList>
    </citation>
    <scope>ALTERNATIVE SPLICING (ISOFORM 2)</scope>
    <scope>SUBCELLULAR LOCATION</scope>
</reference>
<reference key="14">
    <citation type="journal article" date="2005" name="Oncogene">
        <title>Adhesion signaling by a novel mitotic substrate of src kinases.</title>
        <authorList>
            <person name="Bhatt A.S."/>
            <person name="Erdjument-Bromage H."/>
            <person name="Tempst P."/>
            <person name="Craik C.S."/>
            <person name="Moasser M.M."/>
        </authorList>
    </citation>
    <scope>INTERACTION WITH CDCP1</scope>
</reference>
<reference key="15">
    <citation type="journal article" date="2011" name="BMC Syst. Biol.">
        <title>Initial characterization of the human central proteome.</title>
        <authorList>
            <person name="Burkard T.R."/>
            <person name="Planyavsky M."/>
            <person name="Kaupe I."/>
            <person name="Breitwieser F.P."/>
            <person name="Buerckstuemmer T."/>
            <person name="Bennett K.L."/>
            <person name="Superti-Furga G."/>
            <person name="Colinge J."/>
        </authorList>
    </citation>
    <scope>IDENTIFICATION BY MASS SPECTROMETRY [LARGE SCALE ANALYSIS]</scope>
</reference>
<reference key="16">
    <citation type="journal article" date="2012" name="Nat. Cell Biol.">
        <title>Syndecan-syntenin-ALIX regulates the biogenesis of exosomes.</title>
        <authorList>
            <person name="Baietti M.F."/>
            <person name="Zhang Z."/>
            <person name="Mortier E."/>
            <person name="Melchior A."/>
            <person name="Degeest G."/>
            <person name="Geeraerts A."/>
            <person name="Ivarsson Y."/>
            <person name="Depoortere F."/>
            <person name="Coomans C."/>
            <person name="Vermeiren E."/>
            <person name="Zimmermann P."/>
            <person name="David G."/>
        </authorList>
    </citation>
    <scope>FUNCTION</scope>
</reference>
<reference key="17">
    <citation type="journal article" date="2014" name="J. Proteomics">
        <title>An enzyme assisted RP-RPLC approach for in-depth analysis of human liver phosphoproteome.</title>
        <authorList>
            <person name="Bian Y."/>
            <person name="Song C."/>
            <person name="Cheng K."/>
            <person name="Dong M."/>
            <person name="Wang F."/>
            <person name="Huang J."/>
            <person name="Sun D."/>
            <person name="Wang L."/>
            <person name="Ye M."/>
            <person name="Zou H."/>
        </authorList>
    </citation>
    <scope>IDENTIFICATION BY MASS SPECTROMETRY [LARGE SCALE ANALYSIS]</scope>
    <source>
        <tissue>Liver</tissue>
    </source>
</reference>
<reference key="18">
    <citation type="journal article" date="2020" name="Glycobiology">
        <title>An affinity chromatography and glycoproteomics workflow to profile the chondroitin sulfate proteoglycans that interact with malarial VAR2CSA in the placenta and in cancer.</title>
        <authorList>
            <person name="Toledo A.G."/>
            <person name="Pihl J."/>
            <person name="Spliid C.B."/>
            <person name="Persson A."/>
            <person name="Nilsson J."/>
            <person name="Pereira M.A."/>
            <person name="Gustavsson T."/>
            <person name="Choudhary S."/>
            <person name="Oo H.Z."/>
            <person name="Black P.C."/>
            <person name="Daugaard M."/>
            <person name="Esko J.D."/>
            <person name="Larson G."/>
            <person name="Salanti A."/>
            <person name="Clausen T.M."/>
        </authorList>
    </citation>
    <scope>GLYCOSYLATION AT SER-95</scope>
</reference>
<reference key="19">
    <citation type="journal article" date="2022" name="J. Proteins Proteom.">
        <title>Mass spectrometric analysis of chondroitin sulfate-linked peptides.</title>
        <authorList>
            <person name="Ramarajan M.G."/>
            <person name="Saraswat M."/>
            <person name="Budhraja R."/>
            <person name="Garapati K."/>
            <person name="Raymond K."/>
            <person name="Pandey A."/>
        </authorList>
    </citation>
    <scope>TISSUE SPECIFICITY</scope>
    <scope>GLYCOSYLATION AT SER-95</scope>
</reference>
<reference key="20">
    <citation type="journal article" date="2001" name="Biochemistry">
        <title>Solution structure of the dimeric cytoplasmic domain of syndecan-4.</title>
        <authorList>
            <person name="Shin J."/>
            <person name="Lee W."/>
            <person name="Lee D."/>
            <person name="Koo B.-K."/>
            <person name="Han I."/>
            <person name="Lim Y."/>
            <person name="Woods A."/>
            <person name="Couchman J.R."/>
            <person name="Oh E.-S."/>
        </authorList>
    </citation>
    <scope>STRUCTURE BY NMR OF 171-198</scope>
</reference>
<reference key="21">
    <citation type="journal article" date="2003" name="Structure">
        <title>Molecular roots of degenerate specificity in syntenin's PDZ2 domain: reassessment of the PDZ recognition paradigm.</title>
        <authorList>
            <person name="Kang B.S."/>
            <person name="Cooper D.R."/>
            <person name="Devedjiev Y."/>
            <person name="Derewenda U."/>
            <person name="Derewenda Z.S."/>
        </authorList>
    </citation>
    <scope>X-RAY CRYSTALLOGRAPHY (1.85 ANGSTROMS) OF 193-198 IN COMPLEX WITH SDCBP</scope>
</reference>
<reference key="22">
    <citation type="journal article" date="2006" name="Biochemistry">
        <title>The binding of the PDZ tandem of syntenin to target proteins.</title>
        <authorList>
            <person name="Grembecka J."/>
            <person name="Cierpicki T."/>
            <person name="Devedjiev Y."/>
            <person name="Derewenda U."/>
            <person name="Kang B.S."/>
            <person name="Bushweller J.H."/>
            <person name="Derewenda Z.S."/>
        </authorList>
    </citation>
    <scope>X-RAY CRYSTALLOGRAPHY (2.3 ANGSTROMS) OF 182-198 IN COMPLEX WITH SDCBP</scope>
</reference>